<feature type="chain" id="PRO_0000415631" description="L-alanine exporter AlaE">
    <location>
        <begin position="1"/>
        <end position="150"/>
    </location>
</feature>
<feature type="transmembrane region" description="Helical" evidence="1">
    <location>
        <begin position="17"/>
        <end position="37"/>
    </location>
</feature>
<feature type="transmembrane region" description="Helical" evidence="1">
    <location>
        <begin position="48"/>
        <end position="68"/>
    </location>
</feature>
<feature type="transmembrane region" description="Helical" evidence="1">
    <location>
        <begin position="86"/>
        <end position="106"/>
    </location>
</feature>
<feature type="transmembrane region" description="Helical" evidence="1">
    <location>
        <begin position="111"/>
        <end position="131"/>
    </location>
</feature>
<protein>
    <recommendedName>
        <fullName evidence="1">L-alanine exporter AlaE</fullName>
    </recommendedName>
</protein>
<sequence>MKARGPFCIRHAAADTFAMVVFCFVTGMIIEIFVSGMTFQQSLASRTLSIPVNIAIAWPYGVFRDYVLRQGRKISPTGWMKNLSDLVAYVLFQSPVYAAILFTVGASTDQIITAVATNALVSCGMGVLYGYFLDMCRRWFKVPGYTVSEG</sequence>
<accession>Q9KR19</accession>
<evidence type="ECO:0000255" key="1">
    <source>
        <dbReference type="HAMAP-Rule" id="MF_00914"/>
    </source>
</evidence>
<name>ALAE_VIBCH</name>
<organism>
    <name type="scientific">Vibrio cholerae serotype O1 (strain ATCC 39315 / El Tor Inaba N16961)</name>
    <dbReference type="NCBI Taxonomy" id="243277"/>
    <lineage>
        <taxon>Bacteria</taxon>
        <taxon>Pseudomonadati</taxon>
        <taxon>Pseudomonadota</taxon>
        <taxon>Gammaproteobacteria</taxon>
        <taxon>Vibrionales</taxon>
        <taxon>Vibrionaceae</taxon>
        <taxon>Vibrio</taxon>
    </lineage>
</organism>
<keyword id="KW-0029">Amino-acid transport</keyword>
<keyword id="KW-0997">Cell inner membrane</keyword>
<keyword id="KW-1003">Cell membrane</keyword>
<keyword id="KW-0472">Membrane</keyword>
<keyword id="KW-1185">Reference proteome</keyword>
<keyword id="KW-0812">Transmembrane</keyword>
<keyword id="KW-1133">Transmembrane helix</keyword>
<keyword id="KW-0813">Transport</keyword>
<gene>
    <name evidence="1" type="primary">alaE</name>
    <name type="ordered locus">VC_1828</name>
</gene>
<proteinExistence type="inferred from homology"/>
<comment type="function">
    <text evidence="1">Exports L-alanine.</text>
</comment>
<comment type="subcellular location">
    <subcellularLocation>
        <location evidence="1">Cell inner membrane</location>
        <topology evidence="1">Multi-pass membrane protein</topology>
    </subcellularLocation>
</comment>
<comment type="similarity">
    <text evidence="1">Belongs to the AlaE exporter family.</text>
</comment>
<reference key="1">
    <citation type="journal article" date="2000" name="Nature">
        <title>DNA sequence of both chromosomes of the cholera pathogen Vibrio cholerae.</title>
        <authorList>
            <person name="Heidelberg J.F."/>
            <person name="Eisen J.A."/>
            <person name="Nelson W.C."/>
            <person name="Clayton R.A."/>
            <person name="Gwinn M.L."/>
            <person name="Dodson R.J."/>
            <person name="Haft D.H."/>
            <person name="Hickey E.K."/>
            <person name="Peterson J.D."/>
            <person name="Umayam L.A."/>
            <person name="Gill S.R."/>
            <person name="Nelson K.E."/>
            <person name="Read T.D."/>
            <person name="Tettelin H."/>
            <person name="Richardson D.L."/>
            <person name="Ermolaeva M.D."/>
            <person name="Vamathevan J.J."/>
            <person name="Bass S."/>
            <person name="Qin H."/>
            <person name="Dragoi I."/>
            <person name="Sellers P."/>
            <person name="McDonald L.A."/>
            <person name="Utterback T.R."/>
            <person name="Fleischmann R.D."/>
            <person name="Nierman W.C."/>
            <person name="White O."/>
            <person name="Salzberg S.L."/>
            <person name="Smith H.O."/>
            <person name="Colwell R.R."/>
            <person name="Mekalanos J.J."/>
            <person name="Venter J.C."/>
            <person name="Fraser C.M."/>
        </authorList>
    </citation>
    <scope>NUCLEOTIDE SEQUENCE [LARGE SCALE GENOMIC DNA]</scope>
    <source>
        <strain>ATCC 39315 / El Tor Inaba N16961</strain>
    </source>
</reference>
<dbReference type="EMBL" id="AE003852">
    <property type="protein sequence ID" value="AAF94976.1"/>
    <property type="molecule type" value="Genomic_DNA"/>
</dbReference>
<dbReference type="PIR" id="H82150">
    <property type="entry name" value="H82150"/>
</dbReference>
<dbReference type="RefSeq" id="NP_231462.1">
    <property type="nucleotide sequence ID" value="NC_002505.1"/>
</dbReference>
<dbReference type="RefSeq" id="WP_000647492.1">
    <property type="nucleotide sequence ID" value="NZ_LT906614.1"/>
</dbReference>
<dbReference type="STRING" id="243277.VC_1828"/>
<dbReference type="DNASU" id="2613582"/>
<dbReference type="EnsemblBacteria" id="AAF94976">
    <property type="protein sequence ID" value="AAF94976"/>
    <property type="gene ID" value="VC_1828"/>
</dbReference>
<dbReference type="KEGG" id="vch:VC_1828"/>
<dbReference type="PATRIC" id="fig|243277.26.peg.1746"/>
<dbReference type="eggNOG" id="ENOG502ZRFS">
    <property type="taxonomic scope" value="Bacteria"/>
</dbReference>
<dbReference type="HOGENOM" id="CLU_126493_0_0_6"/>
<dbReference type="Proteomes" id="UP000000584">
    <property type="component" value="Chromosome 1"/>
</dbReference>
<dbReference type="GO" id="GO:0005886">
    <property type="term" value="C:plasma membrane"/>
    <property type="evidence" value="ECO:0007669"/>
    <property type="project" value="UniProtKB-SubCell"/>
</dbReference>
<dbReference type="GO" id="GO:0034639">
    <property type="term" value="F:L-amino acid efflux transmembrane transporter activity"/>
    <property type="evidence" value="ECO:0007669"/>
    <property type="project" value="UniProtKB-UniRule"/>
</dbReference>
<dbReference type="GO" id="GO:0032973">
    <property type="term" value="P:amino acid export across plasma membrane"/>
    <property type="evidence" value="ECO:0007669"/>
    <property type="project" value="UniProtKB-UniRule"/>
</dbReference>
<dbReference type="HAMAP" id="MF_00914">
    <property type="entry name" value="L_Ala_exporter"/>
    <property type="match status" value="1"/>
</dbReference>
<dbReference type="InterPro" id="IPR010574">
    <property type="entry name" value="Ala_export_AlaE"/>
</dbReference>
<dbReference type="Pfam" id="PF06610">
    <property type="entry name" value="AlaE"/>
    <property type="match status" value="1"/>
</dbReference>